<feature type="signal peptide" evidence="1">
    <location>
        <begin position="1"/>
        <end position="23"/>
    </location>
</feature>
<feature type="chain" id="PRO_0000253748" description="Interferon gamma">
    <location>
        <begin position="24"/>
        <end position="167"/>
    </location>
</feature>
<feature type="region of interest" description="Disordered" evidence="5">
    <location>
        <begin position="148"/>
        <end position="167"/>
    </location>
</feature>
<feature type="compositionally biased region" description="Basic residues" evidence="5">
    <location>
        <begin position="149"/>
        <end position="167"/>
    </location>
</feature>
<feature type="modified residue" description="Pyrrolidone carboxylic acid" evidence="2">
    <location>
        <position position="24"/>
    </location>
</feature>
<feature type="glycosylation site" description="N-linked (GlcNAc...) asparagine" evidence="4">
    <location>
        <position position="39"/>
    </location>
</feature>
<feature type="glycosylation site" description="N-linked (GlcNAc...) asparagine" evidence="4">
    <location>
        <position position="105"/>
    </location>
</feature>
<accession>Q1WM28</accession>
<gene>
    <name type="primary">IFNG</name>
</gene>
<comment type="function">
    <text evidence="2 3">Type II interferon produced by immune cells such as T-cells and NK cells that plays crucial roles in antimicrobial, antiviral, and antitumor responses by activating effector immune cells and enhancing antigen presentation. Primarily signals through the JAK-STAT pathway after interaction with its receptor IFNGR1 to affect gene regulation. Upon IFNG binding, IFNGR1 intracellular domain opens out to allow association of downstream signaling components JAK2, JAK1 and STAT1, leading to STAT1 activation, nuclear translocation and transcription of IFNG-regulated genes. Many of the induced genes are transcription factors such as IRF1 that are able to further drive regulation of a next wave of transcription. Plays a role in class I antigen presentation pathway by inducing a replacement of catalytic proteasome subunits with immunoproteasome subunits. In turn, increases the quantity, quality, and repertoire of peptides for class I MHC loading. Increases the efficiency of peptide generation also by inducing the expression of activator PA28 that associates with the proteasome and alters its proteolytic cleavage preference. Up-regulates as well MHC II complexes on the cell surface by promoting expression of several key molecules such as cathepsins B/CTSB, H/CTSH, and L/CTSL (By similarity). Participates in the regulation of hematopoietic stem cells during development and under homeostatic conditions by affecting their development, quiescence, and differentiation (By similarity).</text>
</comment>
<comment type="subunit">
    <text evidence="2">Homodimer. Interacts with IFNGR1 (via extracellular domain); this interaction promotes IFNGR1 dimerization.</text>
</comment>
<comment type="subcellular location">
    <subcellularLocation>
        <location evidence="2">Secreted</location>
    </subcellularLocation>
</comment>
<comment type="tissue specificity">
    <text>Released primarily from activated T lymphocytes.</text>
</comment>
<comment type="similarity">
    <text evidence="6">Belongs to the type II (or gamma) interferon family.</text>
</comment>
<sequence>MNYTGYLLAFQLCIILGSSSCYCQADLFKEKYKLRNIFNASDSDVADGGLFLDILKNWKEESDKKIIQSQIVSVYFKIFDNLKDNQIIQKSMATIKEDLIAKFFNSSSSKLNDFPQKLIRTPVNDLKVQRKAVNELFKVMNXDLSPKSNLRKRKRSQSTFHGRRASI</sequence>
<name>IFNG_DASNO</name>
<keyword id="KW-0051">Antiviral defense</keyword>
<keyword id="KW-0202">Cytokine</keyword>
<keyword id="KW-0325">Glycoprotein</keyword>
<keyword id="KW-0341">Growth regulation</keyword>
<keyword id="KW-0873">Pyrrolidone carboxylic acid</keyword>
<keyword id="KW-0964">Secreted</keyword>
<keyword id="KW-0732">Signal</keyword>
<organism>
    <name type="scientific">Dasypus novemcinctus</name>
    <name type="common">Nine-banded armadillo</name>
    <dbReference type="NCBI Taxonomy" id="9361"/>
    <lineage>
        <taxon>Eukaryota</taxon>
        <taxon>Metazoa</taxon>
        <taxon>Chordata</taxon>
        <taxon>Craniata</taxon>
        <taxon>Vertebrata</taxon>
        <taxon>Euteleostomi</taxon>
        <taxon>Mammalia</taxon>
        <taxon>Eutheria</taxon>
        <taxon>Xenarthra</taxon>
        <taxon>Cingulata</taxon>
        <taxon>Dasypodidae</taxon>
        <taxon>Dasypus</taxon>
    </lineage>
</organism>
<evidence type="ECO:0000250" key="1"/>
<evidence type="ECO:0000250" key="2">
    <source>
        <dbReference type="UniProtKB" id="P01579"/>
    </source>
</evidence>
<evidence type="ECO:0000250" key="3">
    <source>
        <dbReference type="UniProtKB" id="P01580"/>
    </source>
</evidence>
<evidence type="ECO:0000255" key="4"/>
<evidence type="ECO:0000256" key="5">
    <source>
        <dbReference type="SAM" id="MobiDB-lite"/>
    </source>
</evidence>
<evidence type="ECO:0000305" key="6"/>
<proteinExistence type="evidence at transcript level"/>
<protein>
    <recommendedName>
        <fullName>Interferon gamma</fullName>
        <shortName>IFN-gamma</shortName>
    </recommendedName>
</protein>
<reference key="1">
    <citation type="submission" date="2006-03" db="EMBL/GenBank/DDBJ databases">
        <title>Overexpression of Dasypus novemcinctus IFN-gamma in E. coli.</title>
        <authorList>
            <person name="Adams J.E."/>
            <person name="Pena M.T."/>
            <person name="Gillis T.P."/>
            <person name="Williams D.L."/>
            <person name="Adams L.B."/>
            <person name="Truman R.W."/>
        </authorList>
    </citation>
    <scope>NUCLEOTIDE SEQUENCE [MRNA]</scope>
</reference>
<dbReference type="EMBL" id="DQ094083">
    <property type="protein sequence ID" value="AAZ57195.1"/>
    <property type="molecule type" value="mRNA"/>
</dbReference>
<dbReference type="RefSeq" id="NP_001296127.1">
    <property type="nucleotide sequence ID" value="NM_001309198.1"/>
</dbReference>
<dbReference type="GlyCosmos" id="Q1WM28">
    <property type="glycosylation" value="2 sites, No reported glycans"/>
</dbReference>
<dbReference type="GeneID" id="101422877"/>
<dbReference type="CTD" id="3458"/>
<dbReference type="HOGENOM" id="CLU_135106_0_0_1"/>
<dbReference type="OrthoDB" id="9937106at2759"/>
<dbReference type="TreeFam" id="TF336308"/>
<dbReference type="GO" id="GO:0005615">
    <property type="term" value="C:extracellular space"/>
    <property type="evidence" value="ECO:0007669"/>
    <property type="project" value="UniProtKB-KW"/>
</dbReference>
<dbReference type="GO" id="GO:0005125">
    <property type="term" value="F:cytokine activity"/>
    <property type="evidence" value="ECO:0007669"/>
    <property type="project" value="UniProtKB-KW"/>
</dbReference>
<dbReference type="GO" id="GO:0005133">
    <property type="term" value="F:type II interferon receptor binding"/>
    <property type="evidence" value="ECO:0007669"/>
    <property type="project" value="InterPro"/>
</dbReference>
<dbReference type="GO" id="GO:0002250">
    <property type="term" value="P:adaptive immune response"/>
    <property type="evidence" value="ECO:0007669"/>
    <property type="project" value="TreeGrafter"/>
</dbReference>
<dbReference type="GO" id="GO:0051607">
    <property type="term" value="P:defense response to virus"/>
    <property type="evidence" value="ECO:0007669"/>
    <property type="project" value="UniProtKB-KW"/>
</dbReference>
<dbReference type="GO" id="GO:0006959">
    <property type="term" value="P:humoral immune response"/>
    <property type="evidence" value="ECO:0007669"/>
    <property type="project" value="TreeGrafter"/>
</dbReference>
<dbReference type="GO" id="GO:0010508">
    <property type="term" value="P:positive regulation of autophagy"/>
    <property type="evidence" value="ECO:0000250"/>
    <property type="project" value="UniProtKB"/>
</dbReference>
<dbReference type="FunFam" id="1.20.1250.10:FF:000007">
    <property type="entry name" value="Interferon gamma"/>
    <property type="match status" value="1"/>
</dbReference>
<dbReference type="Gene3D" id="1.20.1250.10">
    <property type="match status" value="1"/>
</dbReference>
<dbReference type="InterPro" id="IPR009079">
    <property type="entry name" value="4_helix_cytokine-like_core"/>
</dbReference>
<dbReference type="InterPro" id="IPR002069">
    <property type="entry name" value="Interferon_gamma"/>
</dbReference>
<dbReference type="PANTHER" id="PTHR11419">
    <property type="entry name" value="INTERFERON GAMMA"/>
    <property type="match status" value="1"/>
</dbReference>
<dbReference type="PANTHER" id="PTHR11419:SF0">
    <property type="entry name" value="INTERFERON GAMMA"/>
    <property type="match status" value="1"/>
</dbReference>
<dbReference type="Pfam" id="PF00714">
    <property type="entry name" value="IFN-gamma"/>
    <property type="match status" value="1"/>
</dbReference>
<dbReference type="PIRSF" id="PIRSF001936">
    <property type="entry name" value="IFN-gamma"/>
    <property type="match status" value="1"/>
</dbReference>
<dbReference type="SUPFAM" id="SSF47266">
    <property type="entry name" value="4-helical cytokines"/>
    <property type="match status" value="1"/>
</dbReference>